<organism>
    <name type="scientific">Pyrenophora tritici-repentis (strain Pt-1C-BFP)</name>
    <name type="common">Wheat tan spot fungus</name>
    <name type="synonym">Drechslera tritici-repentis</name>
    <dbReference type="NCBI Taxonomy" id="426418"/>
    <lineage>
        <taxon>Eukaryota</taxon>
        <taxon>Fungi</taxon>
        <taxon>Dikarya</taxon>
        <taxon>Ascomycota</taxon>
        <taxon>Pezizomycotina</taxon>
        <taxon>Dothideomycetes</taxon>
        <taxon>Pleosporomycetidae</taxon>
        <taxon>Pleosporales</taxon>
        <taxon>Pleosporineae</taxon>
        <taxon>Pleosporaceae</taxon>
        <taxon>Pyrenophora</taxon>
    </lineage>
</organism>
<evidence type="ECO:0000255" key="1">
    <source>
        <dbReference type="HAMAP-Rule" id="MF_03175"/>
    </source>
</evidence>
<evidence type="ECO:0000256" key="2">
    <source>
        <dbReference type="SAM" id="MobiDB-lite"/>
    </source>
</evidence>
<name>MAP22_PYRTR</name>
<feature type="chain" id="PRO_0000407612" description="Methionine aminopeptidase 2-2">
    <location>
        <begin position="1"/>
        <end position="451"/>
    </location>
</feature>
<feature type="region of interest" description="Disordered" evidence="2">
    <location>
        <begin position="1"/>
        <end position="101"/>
    </location>
</feature>
<feature type="compositionally biased region" description="Acidic residues" evidence="2">
    <location>
        <begin position="37"/>
        <end position="51"/>
    </location>
</feature>
<feature type="compositionally biased region" description="Basic residues" evidence="2">
    <location>
        <begin position="60"/>
        <end position="73"/>
    </location>
</feature>
<feature type="binding site" evidence="1">
    <location>
        <position position="204"/>
    </location>
    <ligand>
        <name>substrate</name>
    </ligand>
</feature>
<feature type="binding site" evidence="1">
    <location>
        <position position="224"/>
    </location>
    <ligand>
        <name>a divalent metal cation</name>
        <dbReference type="ChEBI" id="CHEBI:60240"/>
        <label>1</label>
    </ligand>
</feature>
<feature type="binding site" evidence="1">
    <location>
        <position position="235"/>
    </location>
    <ligand>
        <name>a divalent metal cation</name>
        <dbReference type="ChEBI" id="CHEBI:60240"/>
        <label>1</label>
    </ligand>
</feature>
<feature type="binding site" evidence="1">
    <location>
        <position position="235"/>
    </location>
    <ligand>
        <name>a divalent metal cation</name>
        <dbReference type="ChEBI" id="CHEBI:60240"/>
        <label>2</label>
        <note>catalytic</note>
    </ligand>
</feature>
<feature type="binding site" evidence="1">
    <location>
        <position position="304"/>
    </location>
    <ligand>
        <name>a divalent metal cation</name>
        <dbReference type="ChEBI" id="CHEBI:60240"/>
        <label>2</label>
        <note>catalytic</note>
    </ligand>
</feature>
<feature type="binding site" evidence="1">
    <location>
        <position position="312"/>
    </location>
    <ligand>
        <name>substrate</name>
    </ligand>
</feature>
<feature type="binding site" evidence="1">
    <location>
        <position position="337"/>
    </location>
    <ligand>
        <name>a divalent metal cation</name>
        <dbReference type="ChEBI" id="CHEBI:60240"/>
        <label>2</label>
        <note>catalytic</note>
    </ligand>
</feature>
<feature type="binding site" evidence="1">
    <location>
        <position position="432"/>
    </location>
    <ligand>
        <name>a divalent metal cation</name>
        <dbReference type="ChEBI" id="CHEBI:60240"/>
        <label>1</label>
    </ligand>
</feature>
<feature type="binding site" evidence="1">
    <location>
        <position position="432"/>
    </location>
    <ligand>
        <name>a divalent metal cation</name>
        <dbReference type="ChEBI" id="CHEBI:60240"/>
        <label>2</label>
        <note>catalytic</note>
    </ligand>
</feature>
<comment type="function">
    <text evidence="1">Cotranslationally removes the N-terminal methionine from nascent proteins. The N-terminal methionine is often cleaved when the second residue in the primary sequence is small and uncharged (Met-Ala-, Cys, Gly, Pro, Ser, Thr, or Val).</text>
</comment>
<comment type="catalytic activity">
    <reaction evidence="1">
        <text>Release of N-terminal amino acids, preferentially methionine, from peptides and arylamides.</text>
        <dbReference type="EC" id="3.4.11.18"/>
    </reaction>
</comment>
<comment type="cofactor">
    <cofactor evidence="1">
        <name>Co(2+)</name>
        <dbReference type="ChEBI" id="CHEBI:48828"/>
    </cofactor>
    <cofactor evidence="1">
        <name>Zn(2+)</name>
        <dbReference type="ChEBI" id="CHEBI:29105"/>
    </cofactor>
    <cofactor evidence="1">
        <name>Mn(2+)</name>
        <dbReference type="ChEBI" id="CHEBI:29035"/>
    </cofactor>
    <cofactor evidence="1">
        <name>Fe(2+)</name>
        <dbReference type="ChEBI" id="CHEBI:29033"/>
    </cofactor>
    <text evidence="1">Binds 2 divalent metal cations per subunit. Has a high-affinity and a low affinity metal-binding site. The true nature of the physiological cofactor is under debate. The enzyme is active with cobalt, zinc, manganese or divalent iron ions. Most likely, methionine aminopeptidases function as mononuclear Fe(2+)-metalloproteases under physiological conditions, and the catalytically relevant metal-binding site has been assigned to the histidine-containing high-affinity site.</text>
</comment>
<comment type="subcellular location">
    <subcellularLocation>
        <location evidence="1">Cytoplasm</location>
    </subcellularLocation>
</comment>
<comment type="similarity">
    <text evidence="1">Belongs to the peptidase M24A family. Methionine aminopeptidase eukaryotic type 2 subfamily.</text>
</comment>
<dbReference type="EC" id="3.4.11.18" evidence="1"/>
<dbReference type="EMBL" id="DS231617">
    <property type="protein sequence ID" value="EDU47209.1"/>
    <property type="molecule type" value="Genomic_DNA"/>
</dbReference>
<dbReference type="RefSeq" id="XP_001934704.1">
    <property type="nucleotide sequence ID" value="XM_001934669.1"/>
</dbReference>
<dbReference type="SMR" id="B2W1N6"/>
<dbReference type="FunCoup" id="B2W1N6">
    <property type="interactions" value="1148"/>
</dbReference>
<dbReference type="STRING" id="426418.B2W1N6"/>
<dbReference type="EnsemblFungi" id="EDU47209">
    <property type="protein sequence ID" value="EDU47209"/>
    <property type="gene ID" value="PTRG_04371"/>
</dbReference>
<dbReference type="GeneID" id="6342609"/>
<dbReference type="KEGG" id="ptrr:6342609"/>
<dbReference type="eggNOG" id="KOG2775">
    <property type="taxonomic scope" value="Eukaryota"/>
</dbReference>
<dbReference type="HOGENOM" id="CLU_015857_7_1_1"/>
<dbReference type="InParanoid" id="B2W1N6"/>
<dbReference type="OMA" id="PFAKRWL"/>
<dbReference type="OrthoDB" id="15070at28556"/>
<dbReference type="Proteomes" id="UP000001471">
    <property type="component" value="Unassembled WGS sequence"/>
</dbReference>
<dbReference type="GO" id="GO:0005737">
    <property type="term" value="C:cytoplasm"/>
    <property type="evidence" value="ECO:0007669"/>
    <property type="project" value="UniProtKB-SubCell"/>
</dbReference>
<dbReference type="GO" id="GO:0004239">
    <property type="term" value="F:initiator methionyl aminopeptidase activity"/>
    <property type="evidence" value="ECO:0007669"/>
    <property type="project" value="UniProtKB-UniRule"/>
</dbReference>
<dbReference type="GO" id="GO:0046872">
    <property type="term" value="F:metal ion binding"/>
    <property type="evidence" value="ECO:0007669"/>
    <property type="project" value="UniProtKB-UniRule"/>
</dbReference>
<dbReference type="GO" id="GO:0070006">
    <property type="term" value="F:metalloaminopeptidase activity"/>
    <property type="evidence" value="ECO:0007669"/>
    <property type="project" value="UniProtKB-UniRule"/>
</dbReference>
<dbReference type="GO" id="GO:0006508">
    <property type="term" value="P:proteolysis"/>
    <property type="evidence" value="ECO:0007669"/>
    <property type="project" value="UniProtKB-KW"/>
</dbReference>
<dbReference type="CDD" id="cd01088">
    <property type="entry name" value="MetAP2"/>
    <property type="match status" value="1"/>
</dbReference>
<dbReference type="Gene3D" id="3.90.230.10">
    <property type="entry name" value="Creatinase/methionine aminopeptidase superfamily"/>
    <property type="match status" value="1"/>
</dbReference>
<dbReference type="Gene3D" id="1.10.10.10">
    <property type="entry name" value="Winged helix-like DNA-binding domain superfamily/Winged helix DNA-binding domain"/>
    <property type="match status" value="1"/>
</dbReference>
<dbReference type="HAMAP" id="MF_03175">
    <property type="entry name" value="MetAP_2_euk"/>
    <property type="match status" value="1"/>
</dbReference>
<dbReference type="InterPro" id="IPR036005">
    <property type="entry name" value="Creatinase/aminopeptidase-like"/>
</dbReference>
<dbReference type="InterPro" id="IPR050247">
    <property type="entry name" value="Met_Aminopeptidase_Type2"/>
</dbReference>
<dbReference type="InterPro" id="IPR000994">
    <property type="entry name" value="Pept_M24"/>
</dbReference>
<dbReference type="InterPro" id="IPR001714">
    <property type="entry name" value="Pept_M24_MAP"/>
</dbReference>
<dbReference type="InterPro" id="IPR002468">
    <property type="entry name" value="Pept_M24A_MAP2"/>
</dbReference>
<dbReference type="InterPro" id="IPR018349">
    <property type="entry name" value="Pept_M24A_MAP2_BS"/>
</dbReference>
<dbReference type="InterPro" id="IPR036388">
    <property type="entry name" value="WH-like_DNA-bd_sf"/>
</dbReference>
<dbReference type="InterPro" id="IPR036390">
    <property type="entry name" value="WH_DNA-bd_sf"/>
</dbReference>
<dbReference type="NCBIfam" id="TIGR00501">
    <property type="entry name" value="met_pdase_II"/>
    <property type="match status" value="1"/>
</dbReference>
<dbReference type="PANTHER" id="PTHR45777">
    <property type="entry name" value="METHIONINE AMINOPEPTIDASE 2"/>
    <property type="match status" value="1"/>
</dbReference>
<dbReference type="PANTHER" id="PTHR45777:SF2">
    <property type="entry name" value="METHIONINE AMINOPEPTIDASE 2"/>
    <property type="match status" value="1"/>
</dbReference>
<dbReference type="Pfam" id="PF00557">
    <property type="entry name" value="Peptidase_M24"/>
    <property type="match status" value="1"/>
</dbReference>
<dbReference type="PRINTS" id="PR00599">
    <property type="entry name" value="MAPEPTIDASE"/>
</dbReference>
<dbReference type="SUPFAM" id="SSF55920">
    <property type="entry name" value="Creatinase/aminopeptidase"/>
    <property type="match status" value="1"/>
</dbReference>
<dbReference type="SUPFAM" id="SSF46785">
    <property type="entry name" value="Winged helix' DNA-binding domain"/>
    <property type="match status" value="1"/>
</dbReference>
<dbReference type="PROSITE" id="PS01202">
    <property type="entry name" value="MAP_2"/>
    <property type="match status" value="1"/>
</dbReference>
<proteinExistence type="inferred from homology"/>
<gene>
    <name type="ORF">PTRG_04371</name>
</gene>
<keyword id="KW-0031">Aminopeptidase</keyword>
<keyword id="KW-0963">Cytoplasm</keyword>
<keyword id="KW-0378">Hydrolase</keyword>
<keyword id="KW-0479">Metal-binding</keyword>
<keyword id="KW-0645">Protease</keyword>
<keyword id="KW-1185">Reference proteome</keyword>
<accession>B2W1N6</accession>
<sequence>MAAKVADDVANLKLDDSNTKPASGAAENGDKPTGDAEHEDSDDDNEAEEGAPEAGEGAAKKKKKRKPRKKKKAGAAGAGGAKTQTAPPRVRIDEVFPNDSYPEGEIQEYVNENAYRTTNEEKRHLDRMNNDFLTEYRKGAEIHREVRQWAQKWIKPGMGLTEIAEGIEDSVRALTGHQGLGNGDAQIAGMGFPTGLSINHCAAHYTPNAGNKMVVNYEDVMKVDFGVHINGRIVDSAFTLTFDPVYDNLVNACKAATNAGIKEAGIDVRMSDIGAAIQEVMESYEVEIKGEMLPVKCIRNLNGHSIGHYTIHGGKTVPIVKGGDQTKMEEGETFAIETFGSTGKGYVRDDMETSHYAMKADAPKVALRVSSAKTLLNSITKNFGTLPFCRRYLDRMGHDKYLLGLNNLVSAGIVEAYPPLCDIKGSYTAQSEHTFVLRPTCKEVLSRGDDY</sequence>
<protein>
    <recommendedName>
        <fullName evidence="1">Methionine aminopeptidase 2-2</fullName>
        <shortName evidence="1">MAP 2-2</shortName>
        <shortName evidence="1">MetAP 2-2</shortName>
        <ecNumber evidence="1">3.4.11.18</ecNumber>
    </recommendedName>
    <alternativeName>
        <fullName evidence="1">Peptidase M</fullName>
    </alternativeName>
</protein>
<reference key="1">
    <citation type="journal article" date="2013" name="G3 (Bethesda)">
        <title>Comparative genomics of a plant-pathogenic fungus, Pyrenophora tritici-repentis, reveals transduplication and the impact of repeat elements on pathogenicity and population divergence.</title>
        <authorList>
            <person name="Manning V.A."/>
            <person name="Pandelova I."/>
            <person name="Dhillon B."/>
            <person name="Wilhelm L.J."/>
            <person name="Goodwin S.B."/>
            <person name="Berlin A.M."/>
            <person name="Figueroa M."/>
            <person name="Freitag M."/>
            <person name="Hane J.K."/>
            <person name="Henrissat B."/>
            <person name="Holman W.H."/>
            <person name="Kodira C.D."/>
            <person name="Martin J."/>
            <person name="Oliver R.P."/>
            <person name="Robbertse B."/>
            <person name="Schackwitz W."/>
            <person name="Schwartz D.C."/>
            <person name="Spatafora J.W."/>
            <person name="Turgeon B.G."/>
            <person name="Yandava C."/>
            <person name="Young S."/>
            <person name="Zhou S."/>
            <person name="Zeng Q."/>
            <person name="Grigoriev I.V."/>
            <person name="Ma L.-J."/>
            <person name="Ciuffetti L.M."/>
        </authorList>
    </citation>
    <scope>NUCLEOTIDE SEQUENCE [LARGE SCALE GENOMIC DNA]</scope>
    <source>
        <strain>Pt-1C-BFP</strain>
    </source>
</reference>